<dbReference type="EMBL" id="AL035602">
    <property type="status" value="NOT_ANNOTATED_CDS"/>
    <property type="molecule type" value="Genomic_DNA"/>
</dbReference>
<dbReference type="EMBL" id="CP002687">
    <property type="status" value="NOT_ANNOTATED_CDS"/>
    <property type="molecule type" value="Genomic_DNA"/>
</dbReference>
<dbReference type="SMR" id="F4JJP1"/>
<dbReference type="STRING" id="3702.F4JJP1"/>
<dbReference type="GlyGen" id="F4JJP1">
    <property type="glycosylation" value="1 site"/>
</dbReference>
<dbReference type="PaxDb" id="3702-AT4G27595.1"/>
<dbReference type="ProteomicsDB" id="243003"/>
<dbReference type="Araport" id="AT4G27595"/>
<dbReference type="TAIR" id="AT4G27595"/>
<dbReference type="eggNOG" id="ENOG502QSCE">
    <property type="taxonomic scope" value="Eukaryota"/>
</dbReference>
<dbReference type="HOGENOM" id="CLU_267899_0_0_1"/>
<dbReference type="InParanoid" id="F4JJP1"/>
<dbReference type="PhylomeDB" id="F4JJP1"/>
<dbReference type="PRO" id="PR:F4JJP1"/>
<dbReference type="Proteomes" id="UP000006548">
    <property type="component" value="Chromosome 4"/>
</dbReference>
<dbReference type="ExpressionAtlas" id="F4JJP1">
    <property type="expression patterns" value="baseline and differential"/>
</dbReference>
<dbReference type="GO" id="GO:0009507">
    <property type="term" value="C:chloroplast"/>
    <property type="evidence" value="ECO:0007669"/>
    <property type="project" value="UniProtKB-SubCell"/>
</dbReference>
<dbReference type="GO" id="GO:0005875">
    <property type="term" value="C:microtubule associated complex"/>
    <property type="evidence" value="ECO:0000314"/>
    <property type="project" value="TAIR"/>
</dbReference>
<dbReference type="GO" id="GO:0007131">
    <property type="term" value="P:reciprocal meiotic recombination"/>
    <property type="evidence" value="ECO:0000318"/>
    <property type="project" value="GO_Central"/>
</dbReference>
<dbReference type="PANTHER" id="PTHR23160">
    <property type="entry name" value="SYNAPTONEMAL COMPLEX PROTEIN-RELATED"/>
    <property type="match status" value="1"/>
</dbReference>
<dbReference type="PANTHER" id="PTHR23160:SF15">
    <property type="entry name" value="WEB FAMILY PROTEIN"/>
    <property type="match status" value="1"/>
</dbReference>
<gene>
    <name type="ordered locus">At4g27595</name>
    <name type="ORF">T29A15</name>
</gene>
<organism>
    <name type="scientific">Arabidopsis thaliana</name>
    <name type="common">Mouse-ear cress</name>
    <dbReference type="NCBI Taxonomy" id="3702"/>
    <lineage>
        <taxon>Eukaryota</taxon>
        <taxon>Viridiplantae</taxon>
        <taxon>Streptophyta</taxon>
        <taxon>Embryophyta</taxon>
        <taxon>Tracheophyta</taxon>
        <taxon>Spermatophyta</taxon>
        <taxon>Magnoliopsida</taxon>
        <taxon>eudicotyledons</taxon>
        <taxon>Gunneridae</taxon>
        <taxon>Pentapetalae</taxon>
        <taxon>rosids</taxon>
        <taxon>malvids</taxon>
        <taxon>Brassicales</taxon>
        <taxon>Brassicaceae</taxon>
        <taxon>Camelineae</taxon>
        <taxon>Arabidopsis</taxon>
    </lineage>
</organism>
<sequence length="1221" mass="138952">MASRTKTGLMETPRSKPSPPTPRVSKPTVTKSDGNSPSPVQSTRLSIDRSPQTVNSKPVSDRRTARVPTPPEANYFLIIICMAFQKSQSRLGKGTGLLVQQTQEDLRKANEQIERLKKDKAKALDDLKESEKLTKEANEKLREALAAQHHAEKSSEIEKFRAVELEQAGIEAVHKKEVSWKKEVESIRSQHALDISALLSTTEELHRIKQELAMTADAKNKALSHAEEATKIAENQAEKAEILSSELSRLKALVGSDEQKKSNEDDEVVSKLKSEIEMLRGKLEKVSILENTLKDQEESIELLHVDLQAAKMVESYANNLAAEWKNEVDKQVEESKELKTSASESLDLAMKQLEENNHALHEAELGNATLKEKVESLVTTIGRQENDLEESQHQVCISKEETSKLEKLVESIKSDLETTQGEKVRALLNEKTATSQIQNLLSEKTELATELENCKKEEEKIKKAMESLTLDLQEVSVEAKEAKEKLLTCQAELELCGVQIESLKLAEKDTNEKHGKMLEDARNEIDGLKSSLENTENEFFNSKTEWEQRELHLMLCVKKLEDGNFSVQEELSKVKNLLHLKEVEACAAKEEDAKMQTNRKELEEEIKDLQEIVEVAKADSMKLKESLVEKEDELKNTAAENRKLREMEVSSIDKIDQLSKVKESLVDKETKLQNIIQEAEELRVKEIDYLKKIEELSAAKESLVEKETKLLSTVQEAEELRRRELACLKKIEELSAVNERLVDKETKLQSSIQEVEVLKEREAENIKQIEELSLSNERLVEKEAKLQTVVQENEELREKESAYQKKIEELSKVDEIFADREAKLQSSTQENEELREREVAYLKKIEELAKLQENLLDKENELHDMVLEIEDLKAKDSLAEKKIEELSNLNKSLLVKESELQDVVFENEKLKSKEALSLKTTEELSDVKQTLADKEKELKTAVVENEKLKAQAASSFQKIEELKNLKQSLLDKENELEGVFQANEELKAKEASSLKKIDELLHLEQSWIDKGNENQELKVREASAAKRIEELSKMKESLLDKELQTVIHDNYELKAREASALKKIEELSKLLEEASSTHEKGEEITNTNPFDNSTGEQKVQESPLEAIDRHLKDDTTIHWSAHNVQVIGKGEKGKDKDTVESEVYHLEKREASSERDTEHDFAEEEVDSKAEGSENFDQLSNGLSLAEQTEDVVSKDQQQKKKKPLLRKFGNLLKKKSSSQK</sequence>
<proteinExistence type="evidence at transcript level"/>
<keyword id="KW-0150">Chloroplast</keyword>
<keyword id="KW-0175">Coiled coil</keyword>
<keyword id="KW-0934">Plastid</keyword>
<keyword id="KW-1185">Reference proteome</keyword>
<keyword id="KW-0809">Transit peptide</keyword>
<comment type="subcellular location">
    <subcellularLocation>
        <location evidence="3">Plastid</location>
        <location evidence="3">Chloroplast</location>
    </subcellularLocation>
</comment>
<comment type="similarity">
    <text evidence="3">Belongs to the WEB family.</text>
</comment>
<reference key="1">
    <citation type="journal article" date="1999" name="Nature">
        <title>Sequence and analysis of chromosome 4 of the plant Arabidopsis thaliana.</title>
        <authorList>
            <person name="Mayer K.F.X."/>
            <person name="Schueller C."/>
            <person name="Wambutt R."/>
            <person name="Murphy G."/>
            <person name="Volckaert G."/>
            <person name="Pohl T."/>
            <person name="Duesterhoeft A."/>
            <person name="Stiekema W."/>
            <person name="Entian K.-D."/>
            <person name="Terryn N."/>
            <person name="Harris B."/>
            <person name="Ansorge W."/>
            <person name="Brandt P."/>
            <person name="Grivell L.A."/>
            <person name="Rieger M."/>
            <person name="Weichselgartner M."/>
            <person name="de Simone V."/>
            <person name="Obermaier B."/>
            <person name="Mache R."/>
            <person name="Mueller M."/>
            <person name="Kreis M."/>
            <person name="Delseny M."/>
            <person name="Puigdomenech P."/>
            <person name="Watson M."/>
            <person name="Schmidtheini T."/>
            <person name="Reichert B."/>
            <person name="Portetelle D."/>
            <person name="Perez-Alonso M."/>
            <person name="Boutry M."/>
            <person name="Bancroft I."/>
            <person name="Vos P."/>
            <person name="Hoheisel J."/>
            <person name="Zimmermann W."/>
            <person name="Wedler H."/>
            <person name="Ridley P."/>
            <person name="Langham S.-A."/>
            <person name="McCullagh B."/>
            <person name="Bilham L."/>
            <person name="Robben J."/>
            <person name="van der Schueren J."/>
            <person name="Grymonprez B."/>
            <person name="Chuang Y.-J."/>
            <person name="Vandenbussche F."/>
            <person name="Braeken M."/>
            <person name="Weltjens I."/>
            <person name="Voet M."/>
            <person name="Bastiaens I."/>
            <person name="Aert R."/>
            <person name="Defoor E."/>
            <person name="Weitzenegger T."/>
            <person name="Bothe G."/>
            <person name="Ramsperger U."/>
            <person name="Hilbert H."/>
            <person name="Braun M."/>
            <person name="Holzer E."/>
            <person name="Brandt A."/>
            <person name="Peters S."/>
            <person name="van Staveren M."/>
            <person name="Dirkse W."/>
            <person name="Mooijman P."/>
            <person name="Klein Lankhorst R."/>
            <person name="Rose M."/>
            <person name="Hauf J."/>
            <person name="Koetter P."/>
            <person name="Berneiser S."/>
            <person name="Hempel S."/>
            <person name="Feldpausch M."/>
            <person name="Lamberth S."/>
            <person name="Van den Daele H."/>
            <person name="De Keyser A."/>
            <person name="Buysshaert C."/>
            <person name="Gielen J."/>
            <person name="Villarroel R."/>
            <person name="De Clercq R."/>
            <person name="van Montagu M."/>
            <person name="Rogers J."/>
            <person name="Cronin A."/>
            <person name="Quail M.A."/>
            <person name="Bray-Allen S."/>
            <person name="Clark L."/>
            <person name="Doggett J."/>
            <person name="Hall S."/>
            <person name="Kay M."/>
            <person name="Lennard N."/>
            <person name="McLay K."/>
            <person name="Mayes R."/>
            <person name="Pettett A."/>
            <person name="Rajandream M.A."/>
            <person name="Lyne M."/>
            <person name="Benes V."/>
            <person name="Rechmann S."/>
            <person name="Borkova D."/>
            <person name="Bloecker H."/>
            <person name="Scharfe M."/>
            <person name="Grimm M."/>
            <person name="Loehnert T.-H."/>
            <person name="Dose S."/>
            <person name="de Haan M."/>
            <person name="Maarse A.C."/>
            <person name="Schaefer M."/>
            <person name="Mueller-Auer S."/>
            <person name="Gabel C."/>
            <person name="Fuchs M."/>
            <person name="Fartmann B."/>
            <person name="Granderath K."/>
            <person name="Dauner D."/>
            <person name="Herzl A."/>
            <person name="Neumann S."/>
            <person name="Argiriou A."/>
            <person name="Vitale D."/>
            <person name="Liguori R."/>
            <person name="Piravandi E."/>
            <person name="Massenet O."/>
            <person name="Quigley F."/>
            <person name="Clabauld G."/>
            <person name="Muendlein A."/>
            <person name="Felber R."/>
            <person name="Schnabl S."/>
            <person name="Hiller R."/>
            <person name="Schmidt W."/>
            <person name="Lecharny A."/>
            <person name="Aubourg S."/>
            <person name="Chefdor F."/>
            <person name="Cooke R."/>
            <person name="Berger C."/>
            <person name="Monfort A."/>
            <person name="Casacuberta E."/>
            <person name="Gibbons T."/>
            <person name="Weber N."/>
            <person name="Vandenbol M."/>
            <person name="Bargues M."/>
            <person name="Terol J."/>
            <person name="Torres A."/>
            <person name="Perez-Perez A."/>
            <person name="Purnelle B."/>
            <person name="Bent E."/>
            <person name="Johnson S."/>
            <person name="Tacon D."/>
            <person name="Jesse T."/>
            <person name="Heijnen L."/>
            <person name="Schwarz S."/>
            <person name="Scholler P."/>
            <person name="Heber S."/>
            <person name="Francs P."/>
            <person name="Bielke C."/>
            <person name="Frishman D."/>
            <person name="Haase D."/>
            <person name="Lemcke K."/>
            <person name="Mewes H.-W."/>
            <person name="Stocker S."/>
            <person name="Zaccaria P."/>
            <person name="Bevan M."/>
            <person name="Wilson R.K."/>
            <person name="de la Bastide M."/>
            <person name="Habermann K."/>
            <person name="Parnell L."/>
            <person name="Dedhia N."/>
            <person name="Gnoj L."/>
            <person name="Schutz K."/>
            <person name="Huang E."/>
            <person name="Spiegel L."/>
            <person name="Sekhon M."/>
            <person name="Murray J."/>
            <person name="Sheet P."/>
            <person name="Cordes M."/>
            <person name="Abu-Threideh J."/>
            <person name="Stoneking T."/>
            <person name="Kalicki J."/>
            <person name="Graves T."/>
            <person name="Harmon G."/>
            <person name="Edwards J."/>
            <person name="Latreille P."/>
            <person name="Courtney L."/>
            <person name="Cloud J."/>
            <person name="Abbott A."/>
            <person name="Scott K."/>
            <person name="Johnson D."/>
            <person name="Minx P."/>
            <person name="Bentley D."/>
            <person name="Fulton B."/>
            <person name="Miller N."/>
            <person name="Greco T."/>
            <person name="Kemp K."/>
            <person name="Kramer J."/>
            <person name="Fulton L."/>
            <person name="Mardis E."/>
            <person name="Dante M."/>
            <person name="Pepin K."/>
            <person name="Hillier L.W."/>
            <person name="Nelson J."/>
            <person name="Spieth J."/>
            <person name="Ryan E."/>
            <person name="Andrews S."/>
            <person name="Geisel C."/>
            <person name="Layman D."/>
            <person name="Du H."/>
            <person name="Ali J."/>
            <person name="Berghoff A."/>
            <person name="Jones K."/>
            <person name="Drone K."/>
            <person name="Cotton M."/>
            <person name="Joshu C."/>
            <person name="Antonoiu B."/>
            <person name="Zidanic M."/>
            <person name="Strong C."/>
            <person name="Sun H."/>
            <person name="Lamar B."/>
            <person name="Yordan C."/>
            <person name="Ma P."/>
            <person name="Zhong J."/>
            <person name="Preston R."/>
            <person name="Vil D."/>
            <person name="Shekher M."/>
            <person name="Matero A."/>
            <person name="Shah R."/>
            <person name="Swaby I.K."/>
            <person name="O'Shaughnessy A."/>
            <person name="Rodriguez M."/>
            <person name="Hoffman J."/>
            <person name="Till S."/>
            <person name="Granat S."/>
            <person name="Shohdy N."/>
            <person name="Hasegawa A."/>
            <person name="Hameed A."/>
            <person name="Lodhi M."/>
            <person name="Johnson A."/>
            <person name="Chen E."/>
            <person name="Marra M.A."/>
            <person name="Martienssen R."/>
            <person name="McCombie W.R."/>
        </authorList>
    </citation>
    <scope>NUCLEOTIDE SEQUENCE [LARGE SCALE GENOMIC DNA]</scope>
    <source>
        <strain>cv. Columbia</strain>
    </source>
</reference>
<reference key="2">
    <citation type="journal article" date="2017" name="Plant J.">
        <title>Araport11: a complete reannotation of the Arabidopsis thaliana reference genome.</title>
        <authorList>
            <person name="Cheng C.Y."/>
            <person name="Krishnakumar V."/>
            <person name="Chan A.P."/>
            <person name="Thibaud-Nissen F."/>
            <person name="Schobel S."/>
            <person name="Town C.D."/>
        </authorList>
    </citation>
    <scope>GENOME REANNOTATION</scope>
    <source>
        <strain>cv. Columbia</strain>
    </source>
</reference>
<protein>
    <recommendedName>
        <fullName>WEB family protein At4g27595, chloroplastic</fullName>
    </recommendedName>
</protein>
<feature type="transit peptide" description="Chloroplast" evidence="1">
    <location>
        <begin position="1"/>
        <end position="82"/>
    </location>
</feature>
<feature type="chain" id="PRO_0000414078" description="WEB family protein At4g27595, chloroplastic">
    <location>
        <begin position="83"/>
        <end position="1221"/>
    </location>
</feature>
<feature type="region of interest" description="Disordered" evidence="2">
    <location>
        <begin position="1"/>
        <end position="68"/>
    </location>
</feature>
<feature type="region of interest" description="Disordered" evidence="2">
    <location>
        <begin position="1073"/>
        <end position="1221"/>
    </location>
</feature>
<feature type="coiled-coil region" evidence="1">
    <location>
        <begin position="95"/>
        <end position="149"/>
    </location>
</feature>
<feature type="coiled-coil region" evidence="1">
    <location>
        <begin position="202"/>
        <end position="543"/>
    </location>
</feature>
<feature type="coiled-coil region" evidence="1">
    <location>
        <begin position="587"/>
        <end position="1084"/>
    </location>
</feature>
<feature type="compositionally biased region" description="Polar residues" evidence="2">
    <location>
        <begin position="32"/>
        <end position="58"/>
    </location>
</feature>
<feature type="compositionally biased region" description="Basic and acidic residues" evidence="2">
    <location>
        <begin position="1073"/>
        <end position="1083"/>
    </location>
</feature>
<feature type="compositionally biased region" description="Polar residues" evidence="2">
    <location>
        <begin position="1084"/>
        <end position="1097"/>
    </location>
</feature>
<feature type="compositionally biased region" description="Basic and acidic residues" evidence="2">
    <location>
        <begin position="1106"/>
        <end position="1116"/>
    </location>
</feature>
<feature type="compositionally biased region" description="Basic and acidic residues" evidence="2">
    <location>
        <begin position="1129"/>
        <end position="1160"/>
    </location>
</feature>
<feature type="compositionally biased region" description="Polar residues" evidence="2">
    <location>
        <begin position="1175"/>
        <end position="1187"/>
    </location>
</feature>
<evidence type="ECO:0000255" key="1"/>
<evidence type="ECO:0000256" key="2">
    <source>
        <dbReference type="SAM" id="MobiDB-lite"/>
    </source>
</evidence>
<evidence type="ECO:0000305" key="3"/>
<accession>F4JJP1</accession>
<name>Y4759_ARATH</name>